<comment type="function">
    <text evidence="1">This protein binds to the 23S rRNA, and is important in its secondary structure. It is located near the subunit interface in the base of the L7/L12 stalk, and near the tRNA binding site of the peptidyltransferase center.</text>
</comment>
<comment type="subunit">
    <text evidence="1">Part of the 50S ribosomal subunit.</text>
</comment>
<comment type="similarity">
    <text evidence="1">Belongs to the universal ribosomal protein uL6 family.</text>
</comment>
<keyword id="KW-0687">Ribonucleoprotein</keyword>
<keyword id="KW-0689">Ribosomal protein</keyword>
<keyword id="KW-0694">RNA-binding</keyword>
<keyword id="KW-0699">rRNA-binding</keyword>
<reference key="1">
    <citation type="journal article" date="1994" name="DNA Res.">
        <title>Cloning and characterization of the ribosomal protein genes in the spc operon of a prokaryotic endosymbiont of the pea aphid, Acyrthosiphon kondoi.</title>
        <authorList>
            <person name="Abe R."/>
            <person name="Yamashita A."/>
            <person name="Isono K."/>
        </authorList>
    </citation>
    <scope>NUCLEOTIDE SEQUENCE [GENOMIC DNA]</scope>
    <source>
        <strain>Kurashiki</strain>
    </source>
</reference>
<organism>
    <name type="scientific">Buchnera aphidicola subsp. Acyrthosiphon kondoi</name>
    <name type="common">Acyrthosiphon kondoi symbiotic bacterium</name>
    <dbReference type="NCBI Taxonomy" id="42474"/>
    <lineage>
        <taxon>Bacteria</taxon>
        <taxon>Pseudomonadati</taxon>
        <taxon>Pseudomonadota</taxon>
        <taxon>Gammaproteobacteria</taxon>
        <taxon>Enterobacterales</taxon>
        <taxon>Erwiniaceae</taxon>
        <taxon>Buchnera</taxon>
    </lineage>
</organism>
<protein>
    <recommendedName>
        <fullName evidence="1">Large ribosomal subunit protein uL6</fullName>
    </recommendedName>
    <alternativeName>
        <fullName evidence="2">50S ribosomal protein L6</fullName>
    </alternativeName>
</protein>
<accession>P46181</accession>
<dbReference type="EMBL" id="D31786">
    <property type="protein sequence ID" value="BAA06590.1"/>
    <property type="molecule type" value="Genomic_DNA"/>
</dbReference>
<dbReference type="SMR" id="P46181"/>
<dbReference type="GO" id="GO:0022625">
    <property type="term" value="C:cytosolic large ribosomal subunit"/>
    <property type="evidence" value="ECO:0007669"/>
    <property type="project" value="TreeGrafter"/>
</dbReference>
<dbReference type="GO" id="GO:0019843">
    <property type="term" value="F:rRNA binding"/>
    <property type="evidence" value="ECO:0007669"/>
    <property type="project" value="UniProtKB-UniRule"/>
</dbReference>
<dbReference type="GO" id="GO:0003735">
    <property type="term" value="F:structural constituent of ribosome"/>
    <property type="evidence" value="ECO:0007669"/>
    <property type="project" value="InterPro"/>
</dbReference>
<dbReference type="GO" id="GO:0002181">
    <property type="term" value="P:cytoplasmic translation"/>
    <property type="evidence" value="ECO:0007669"/>
    <property type="project" value="TreeGrafter"/>
</dbReference>
<dbReference type="FunFam" id="3.90.930.12:FF:000001">
    <property type="entry name" value="50S ribosomal protein L6"/>
    <property type="match status" value="1"/>
</dbReference>
<dbReference type="FunFam" id="3.90.930.12:FF:000002">
    <property type="entry name" value="50S ribosomal protein L6"/>
    <property type="match status" value="1"/>
</dbReference>
<dbReference type="Gene3D" id="3.90.930.12">
    <property type="entry name" value="Ribosomal protein L6, alpha-beta domain"/>
    <property type="match status" value="2"/>
</dbReference>
<dbReference type="HAMAP" id="MF_01365_B">
    <property type="entry name" value="Ribosomal_uL6_B"/>
    <property type="match status" value="1"/>
</dbReference>
<dbReference type="InterPro" id="IPR000702">
    <property type="entry name" value="Ribosomal_uL6-like"/>
</dbReference>
<dbReference type="InterPro" id="IPR036789">
    <property type="entry name" value="Ribosomal_uL6-like_a/b-dom_sf"/>
</dbReference>
<dbReference type="InterPro" id="IPR020040">
    <property type="entry name" value="Ribosomal_uL6_a/b-dom"/>
</dbReference>
<dbReference type="InterPro" id="IPR019906">
    <property type="entry name" value="Ribosomal_uL6_bac-type"/>
</dbReference>
<dbReference type="InterPro" id="IPR002358">
    <property type="entry name" value="Ribosomal_uL6_CS"/>
</dbReference>
<dbReference type="NCBIfam" id="TIGR03654">
    <property type="entry name" value="L6_bact"/>
    <property type="match status" value="1"/>
</dbReference>
<dbReference type="PANTHER" id="PTHR11655">
    <property type="entry name" value="60S/50S RIBOSOMAL PROTEIN L6/L9"/>
    <property type="match status" value="1"/>
</dbReference>
<dbReference type="PANTHER" id="PTHR11655:SF14">
    <property type="entry name" value="LARGE RIBOSOMAL SUBUNIT PROTEIN UL6M"/>
    <property type="match status" value="1"/>
</dbReference>
<dbReference type="Pfam" id="PF00347">
    <property type="entry name" value="Ribosomal_L6"/>
    <property type="match status" value="2"/>
</dbReference>
<dbReference type="PIRSF" id="PIRSF002162">
    <property type="entry name" value="Ribosomal_L6"/>
    <property type="match status" value="1"/>
</dbReference>
<dbReference type="PRINTS" id="PR00059">
    <property type="entry name" value="RIBOSOMALL6"/>
</dbReference>
<dbReference type="SUPFAM" id="SSF56053">
    <property type="entry name" value="Ribosomal protein L6"/>
    <property type="match status" value="2"/>
</dbReference>
<dbReference type="PROSITE" id="PS00525">
    <property type="entry name" value="RIBOSOMAL_L6_1"/>
    <property type="match status" value="1"/>
</dbReference>
<evidence type="ECO:0000255" key="1">
    <source>
        <dbReference type="HAMAP-Rule" id="MF_01365"/>
    </source>
</evidence>
<evidence type="ECO:0000305" key="2"/>
<name>RL6_BUCAK</name>
<proteinExistence type="inferred from homology"/>
<gene>
    <name evidence="1" type="primary">rplF</name>
</gene>
<sequence>MSRVAKAPVVIPAGVEVKLNGQVISIKGKNGELTRTVHDAVIVKQEANALNFRPREGFRNAWAQAGTTRALLNAMVVGVTEGFTKKLQLVGVGYRAAVKGNVVNLALGFSHPIEHQLPAGITAECPSQTEIVLKGVDKQVIGQAAADLRAYRRPEPYKGKGVRYADEVVRTKEAKKK</sequence>
<feature type="chain" id="PRO_0000131041" description="Large ribosomal subunit protein uL6">
    <location>
        <begin position="1"/>
        <end position="177"/>
    </location>
</feature>